<proteinExistence type="inferred from homology"/>
<organism>
    <name type="scientific">Spirogyra maxima</name>
    <name type="common">Green alga</name>
    <dbReference type="NCBI Taxonomy" id="3180"/>
    <lineage>
        <taxon>Eukaryota</taxon>
        <taxon>Viridiplantae</taxon>
        <taxon>Streptophyta</taxon>
        <taxon>Zygnematophyceae</taxon>
        <taxon>Zygnematophycidae</taxon>
        <taxon>Zygnematales</taxon>
        <taxon>Zygnemataceae</taxon>
        <taxon>Spirogyra</taxon>
    </lineage>
</organism>
<protein>
    <recommendedName>
        <fullName evidence="1">Ribulose bisphosphate carboxylase large chain</fullName>
        <shortName evidence="1">RuBisCO large subunit</shortName>
        <ecNumber evidence="1">4.1.1.39</ecNumber>
    </recommendedName>
</protein>
<geneLocation type="chloroplast"/>
<reference key="1">
    <citation type="journal article" date="1994" name="Mol. Phylogenet. Evol.">
        <title>Phylogenetic analysis of green plant rbcL sequences.</title>
        <authorList>
            <person name="Manhart J.R."/>
        </authorList>
    </citation>
    <scope>NUCLEOTIDE SEQUENCE [GENOMIC DNA]</scope>
</reference>
<comment type="function">
    <text evidence="1">RuBisCO catalyzes two reactions: the carboxylation of D-ribulose 1,5-bisphosphate, the primary event in carbon dioxide fixation, as well as the oxidative fragmentation of the pentose substrate in the photorespiration process. Both reactions occur simultaneously and in competition at the same active site.</text>
</comment>
<comment type="catalytic activity">
    <reaction evidence="1">
        <text>2 (2R)-3-phosphoglycerate + 2 H(+) = D-ribulose 1,5-bisphosphate + CO2 + H2O</text>
        <dbReference type="Rhea" id="RHEA:23124"/>
        <dbReference type="ChEBI" id="CHEBI:15377"/>
        <dbReference type="ChEBI" id="CHEBI:15378"/>
        <dbReference type="ChEBI" id="CHEBI:16526"/>
        <dbReference type="ChEBI" id="CHEBI:57870"/>
        <dbReference type="ChEBI" id="CHEBI:58272"/>
        <dbReference type="EC" id="4.1.1.39"/>
    </reaction>
</comment>
<comment type="catalytic activity">
    <reaction evidence="1">
        <text>D-ribulose 1,5-bisphosphate + O2 = 2-phosphoglycolate + (2R)-3-phosphoglycerate + 2 H(+)</text>
        <dbReference type="Rhea" id="RHEA:36631"/>
        <dbReference type="ChEBI" id="CHEBI:15378"/>
        <dbReference type="ChEBI" id="CHEBI:15379"/>
        <dbReference type="ChEBI" id="CHEBI:57870"/>
        <dbReference type="ChEBI" id="CHEBI:58033"/>
        <dbReference type="ChEBI" id="CHEBI:58272"/>
    </reaction>
</comment>
<comment type="cofactor">
    <cofactor evidence="1">
        <name>Mg(2+)</name>
        <dbReference type="ChEBI" id="CHEBI:18420"/>
    </cofactor>
    <text evidence="1">Binds 1 Mg(2+) ion per subunit.</text>
</comment>
<comment type="subunit">
    <text evidence="1">Heterohexadecamer of 8 large chains and 8 small chains; disulfide-linked. The disulfide link is formed within the large subunit homodimers.</text>
</comment>
<comment type="subcellular location">
    <subcellularLocation>
        <location>Plastid</location>
        <location>Chloroplast</location>
    </subcellularLocation>
</comment>
<comment type="PTM">
    <text evidence="1">The disulfide bond which can form in the large chain dimeric partners within the hexadecamer appears to be associated with oxidative stress and protein turnover.</text>
</comment>
<comment type="miscellaneous">
    <text evidence="1">The basic functional RuBisCO is composed of a large chain homodimer in a 'head-to-tail' conformation. In form I RuBisCO this homodimer is arranged in a barrel-like tetramer with the small subunits forming a tetrameric 'cap' on each end of the 'barrel'.</text>
</comment>
<comment type="similarity">
    <text evidence="1">Belongs to the RuBisCO large chain family. Type I subfamily.</text>
</comment>
<name>RBL_SPIMX</name>
<dbReference type="EC" id="4.1.1.39" evidence="1"/>
<dbReference type="EMBL" id="L11057">
    <property type="protein sequence ID" value="AAA57242.1"/>
    <property type="molecule type" value="Genomic_DNA"/>
</dbReference>
<dbReference type="SMR" id="P48716"/>
<dbReference type="GO" id="GO:0009507">
    <property type="term" value="C:chloroplast"/>
    <property type="evidence" value="ECO:0007669"/>
    <property type="project" value="UniProtKB-SubCell"/>
</dbReference>
<dbReference type="GO" id="GO:0000287">
    <property type="term" value="F:magnesium ion binding"/>
    <property type="evidence" value="ECO:0007669"/>
    <property type="project" value="UniProtKB-UniRule"/>
</dbReference>
<dbReference type="GO" id="GO:0004497">
    <property type="term" value="F:monooxygenase activity"/>
    <property type="evidence" value="ECO:0007669"/>
    <property type="project" value="UniProtKB-KW"/>
</dbReference>
<dbReference type="GO" id="GO:0016984">
    <property type="term" value="F:ribulose-bisphosphate carboxylase activity"/>
    <property type="evidence" value="ECO:0007669"/>
    <property type="project" value="UniProtKB-UniRule"/>
</dbReference>
<dbReference type="GO" id="GO:0009853">
    <property type="term" value="P:photorespiration"/>
    <property type="evidence" value="ECO:0007669"/>
    <property type="project" value="UniProtKB-KW"/>
</dbReference>
<dbReference type="GO" id="GO:0019253">
    <property type="term" value="P:reductive pentose-phosphate cycle"/>
    <property type="evidence" value="ECO:0007669"/>
    <property type="project" value="UniProtKB-UniRule"/>
</dbReference>
<dbReference type="CDD" id="cd08212">
    <property type="entry name" value="RuBisCO_large_I"/>
    <property type="match status" value="1"/>
</dbReference>
<dbReference type="FunFam" id="3.20.20.110:FF:000001">
    <property type="entry name" value="Ribulose bisphosphate carboxylase large chain"/>
    <property type="match status" value="1"/>
</dbReference>
<dbReference type="FunFam" id="3.30.70.150:FF:000001">
    <property type="entry name" value="Ribulose bisphosphate carboxylase large chain"/>
    <property type="match status" value="1"/>
</dbReference>
<dbReference type="Gene3D" id="3.20.20.110">
    <property type="entry name" value="Ribulose bisphosphate carboxylase, large subunit, C-terminal domain"/>
    <property type="match status" value="1"/>
</dbReference>
<dbReference type="Gene3D" id="3.30.70.150">
    <property type="entry name" value="RuBisCO large subunit, N-terminal domain"/>
    <property type="match status" value="1"/>
</dbReference>
<dbReference type="HAMAP" id="MF_01338">
    <property type="entry name" value="RuBisCO_L_type1"/>
    <property type="match status" value="1"/>
</dbReference>
<dbReference type="InterPro" id="IPR033966">
    <property type="entry name" value="RuBisCO"/>
</dbReference>
<dbReference type="InterPro" id="IPR020878">
    <property type="entry name" value="RuBisCo_large_chain_AS"/>
</dbReference>
<dbReference type="InterPro" id="IPR000685">
    <property type="entry name" value="RuBisCO_lsu_C"/>
</dbReference>
<dbReference type="InterPro" id="IPR036376">
    <property type="entry name" value="RuBisCO_lsu_C_sf"/>
</dbReference>
<dbReference type="InterPro" id="IPR017443">
    <property type="entry name" value="RuBisCO_lsu_fd_N"/>
</dbReference>
<dbReference type="InterPro" id="IPR036422">
    <property type="entry name" value="RuBisCO_lsu_N_sf"/>
</dbReference>
<dbReference type="InterPro" id="IPR020888">
    <property type="entry name" value="RuBisCO_lsuI"/>
</dbReference>
<dbReference type="NCBIfam" id="NF003252">
    <property type="entry name" value="PRK04208.1"/>
    <property type="match status" value="1"/>
</dbReference>
<dbReference type="PANTHER" id="PTHR42704">
    <property type="entry name" value="RIBULOSE BISPHOSPHATE CARBOXYLASE"/>
    <property type="match status" value="1"/>
</dbReference>
<dbReference type="PANTHER" id="PTHR42704:SF17">
    <property type="entry name" value="RIBULOSE BISPHOSPHATE CARBOXYLASE LARGE CHAIN"/>
    <property type="match status" value="1"/>
</dbReference>
<dbReference type="Pfam" id="PF00016">
    <property type="entry name" value="RuBisCO_large"/>
    <property type="match status" value="1"/>
</dbReference>
<dbReference type="Pfam" id="PF02788">
    <property type="entry name" value="RuBisCO_large_N"/>
    <property type="match status" value="1"/>
</dbReference>
<dbReference type="SFLD" id="SFLDG01052">
    <property type="entry name" value="RuBisCO"/>
    <property type="match status" value="1"/>
</dbReference>
<dbReference type="SFLD" id="SFLDS00014">
    <property type="entry name" value="RuBisCO"/>
    <property type="match status" value="1"/>
</dbReference>
<dbReference type="SFLD" id="SFLDG00301">
    <property type="entry name" value="RuBisCO-like_proteins"/>
    <property type="match status" value="1"/>
</dbReference>
<dbReference type="SUPFAM" id="SSF51649">
    <property type="entry name" value="RuBisCo, C-terminal domain"/>
    <property type="match status" value="1"/>
</dbReference>
<dbReference type="SUPFAM" id="SSF54966">
    <property type="entry name" value="RuBisCO, large subunit, small (N-terminal) domain"/>
    <property type="match status" value="1"/>
</dbReference>
<dbReference type="PROSITE" id="PS00157">
    <property type="entry name" value="RUBISCO_LARGE"/>
    <property type="match status" value="1"/>
</dbReference>
<evidence type="ECO:0000255" key="1">
    <source>
        <dbReference type="HAMAP-Rule" id="MF_01338"/>
    </source>
</evidence>
<sequence length="475" mass="52867">MSPQTETKAGAGFKAGVKDYRLTYYTPEYETKETDILAAFRMTPQPGVPPEEAGAAVAAESSTGTWTTVWTDGLTSLDRYKGRCYDIEPVAGEENQYIAYVAYPLDLFEEGSVTNLFTSIVGNVFGFKALRALRLEDLRIPPAYSKTFQGPPHGYQVERDKINKYGRPLLGCTIKPKLGLSAKNYGRAVYECLRGGLDFTKDDENVNSQPFMRWRDRFLFVAEAIYKAQAETGEIKGHYLNATAGTCEEMMKRAEYAKELGVPIIMHDYLTGGFTANTSLAHYCRDNGLLLHIHRAMQAVIDRQKNHGIHFRVLAKALRMSGGDHIHSGTVVGKLEGERQVTLGFVDLLRDDYIEKDRSRGIYFTQDWVSMPGVLPVASGGIHVWHMPALTEIFGDDSVLQFGGGTLGHPWGNAPGRVANRVALEACVQARNEGRDLAREGNEVIREACKWSPELAAACEVWKEIKFEFDTIDTL</sequence>
<feature type="propeptide" id="PRO_0000031413" evidence="1">
    <location>
        <begin position="1"/>
        <end position="2"/>
    </location>
</feature>
<feature type="chain" id="PRO_0000031414" description="Ribulose bisphosphate carboxylase large chain">
    <location>
        <begin position="3"/>
        <end position="475"/>
    </location>
</feature>
<feature type="active site" description="Proton acceptor" evidence="1">
    <location>
        <position position="175"/>
    </location>
</feature>
<feature type="active site" description="Proton acceptor" evidence="1">
    <location>
        <position position="294"/>
    </location>
</feature>
<feature type="binding site" description="in homodimeric partner" evidence="1">
    <location>
        <position position="123"/>
    </location>
    <ligand>
        <name>substrate</name>
    </ligand>
</feature>
<feature type="binding site" evidence="1">
    <location>
        <position position="173"/>
    </location>
    <ligand>
        <name>substrate</name>
    </ligand>
</feature>
<feature type="binding site" evidence="1">
    <location>
        <position position="177"/>
    </location>
    <ligand>
        <name>substrate</name>
    </ligand>
</feature>
<feature type="binding site" description="via carbamate group" evidence="1">
    <location>
        <position position="201"/>
    </location>
    <ligand>
        <name>Mg(2+)</name>
        <dbReference type="ChEBI" id="CHEBI:18420"/>
    </ligand>
</feature>
<feature type="binding site" evidence="1">
    <location>
        <position position="203"/>
    </location>
    <ligand>
        <name>Mg(2+)</name>
        <dbReference type="ChEBI" id="CHEBI:18420"/>
    </ligand>
</feature>
<feature type="binding site" evidence="1">
    <location>
        <position position="204"/>
    </location>
    <ligand>
        <name>Mg(2+)</name>
        <dbReference type="ChEBI" id="CHEBI:18420"/>
    </ligand>
</feature>
<feature type="binding site" evidence="1">
    <location>
        <position position="295"/>
    </location>
    <ligand>
        <name>substrate</name>
    </ligand>
</feature>
<feature type="binding site" evidence="1">
    <location>
        <position position="327"/>
    </location>
    <ligand>
        <name>substrate</name>
    </ligand>
</feature>
<feature type="binding site" evidence="1">
    <location>
        <position position="379"/>
    </location>
    <ligand>
        <name>substrate</name>
    </ligand>
</feature>
<feature type="site" description="Transition state stabilizer" evidence="1">
    <location>
        <position position="334"/>
    </location>
</feature>
<feature type="modified residue" description="N-acetylproline" evidence="1">
    <location>
        <position position="3"/>
    </location>
</feature>
<feature type="modified residue" description="N6,N6,N6-trimethyllysine" evidence="1">
    <location>
        <position position="14"/>
    </location>
</feature>
<feature type="modified residue" description="N6-carboxylysine" evidence="1">
    <location>
        <position position="201"/>
    </location>
</feature>
<feature type="disulfide bond" description="Interchain; in linked form" evidence="1">
    <location>
        <position position="247"/>
    </location>
</feature>
<accession>P48716</accession>
<gene>
    <name evidence="1" type="primary">rbcL</name>
</gene>
<keyword id="KW-0007">Acetylation</keyword>
<keyword id="KW-0113">Calvin cycle</keyword>
<keyword id="KW-0120">Carbon dioxide fixation</keyword>
<keyword id="KW-0150">Chloroplast</keyword>
<keyword id="KW-1015">Disulfide bond</keyword>
<keyword id="KW-0456">Lyase</keyword>
<keyword id="KW-0460">Magnesium</keyword>
<keyword id="KW-0479">Metal-binding</keyword>
<keyword id="KW-0488">Methylation</keyword>
<keyword id="KW-0503">Monooxygenase</keyword>
<keyword id="KW-0560">Oxidoreductase</keyword>
<keyword id="KW-0601">Photorespiration</keyword>
<keyword id="KW-0602">Photosynthesis</keyword>
<keyword id="KW-0934">Plastid</keyword>